<protein>
    <recommendedName>
        <fullName>Non-specific lipid-transfer protein 6</fullName>
        <shortName>LTP 6</shortName>
    </recommendedName>
    <alternativeName>
        <fullName>Xylogen-like protein 15</fullName>
        <shortName>AtXYP15</shortName>
    </alternativeName>
</protein>
<comment type="function">
    <text evidence="1">Plant non-specific lipid-transfer proteins transfer phospholipids as well as galactolipids across membranes. May play a role in wax or cutin deposition in the cell walls of expanding epidermal cells and certain secretory tissues (By similarity).</text>
</comment>
<comment type="alternative products">
    <event type="alternative splicing"/>
    <isoform>
        <id>Q9LDB4-1</id>
        <name>1</name>
        <sequence type="displayed"/>
    </isoform>
    <text>A number of isoforms are produced. According to EST sequences.</text>
</comment>
<comment type="similarity">
    <text evidence="3">Belongs to the plant LTP family.</text>
</comment>
<dbReference type="EMBL" id="AF159803">
    <property type="protein sequence ID" value="AAF76932.1"/>
    <property type="molecule type" value="mRNA"/>
</dbReference>
<dbReference type="EMBL" id="AB246334">
    <property type="protein sequence ID" value="BAE73271.1"/>
    <property type="molecule type" value="mRNA"/>
</dbReference>
<dbReference type="EMBL" id="AC012562">
    <property type="protein sequence ID" value="AAG51363.1"/>
    <property type="molecule type" value="Genomic_DNA"/>
</dbReference>
<dbReference type="EMBL" id="CP002686">
    <property type="protein sequence ID" value="AEE74676.1"/>
    <property type="molecule type" value="Genomic_DNA"/>
</dbReference>
<dbReference type="EMBL" id="AY059951">
    <property type="protein sequence ID" value="AAL24433.1"/>
    <property type="molecule type" value="mRNA"/>
</dbReference>
<dbReference type="EMBL" id="AY081617">
    <property type="protein sequence ID" value="AAM10179.1"/>
    <property type="molecule type" value="mRNA"/>
</dbReference>
<dbReference type="EMBL" id="AY086646">
    <property type="protein sequence ID" value="AAM63704.1"/>
    <property type="molecule type" value="mRNA"/>
</dbReference>
<dbReference type="RefSeq" id="NP_187489.1">
    <molecule id="Q9LDB4-1"/>
    <property type="nucleotide sequence ID" value="NM_111711.4"/>
</dbReference>
<dbReference type="SMR" id="Q9LDB4"/>
<dbReference type="BioGRID" id="5359">
    <property type="interactions" value="1"/>
</dbReference>
<dbReference type="FunCoup" id="Q9LDB4">
    <property type="interactions" value="29"/>
</dbReference>
<dbReference type="STRING" id="3702.Q9LDB4"/>
<dbReference type="PaxDb" id="3702-AT3G08770.2"/>
<dbReference type="ProteomicsDB" id="251179">
    <molecule id="Q9LDB4-1"/>
</dbReference>
<dbReference type="EnsemblPlants" id="AT3G08770.1">
    <molecule id="Q9LDB4-1"/>
    <property type="protein sequence ID" value="AT3G08770.1"/>
    <property type="gene ID" value="AT3G08770"/>
</dbReference>
<dbReference type="GeneID" id="820024"/>
<dbReference type="Gramene" id="AT3G08770.1">
    <molecule id="Q9LDB4-1"/>
    <property type="protein sequence ID" value="AT3G08770.1"/>
    <property type="gene ID" value="AT3G08770"/>
</dbReference>
<dbReference type="KEGG" id="ath:AT3G08770"/>
<dbReference type="Araport" id="AT3G08770"/>
<dbReference type="TAIR" id="AT3G08770">
    <property type="gene designation" value="LTP6"/>
</dbReference>
<dbReference type="eggNOG" id="ENOG502S4CI">
    <property type="taxonomic scope" value="Eukaryota"/>
</dbReference>
<dbReference type="HOGENOM" id="CLU_128423_0_0_1"/>
<dbReference type="InParanoid" id="Q9LDB4"/>
<dbReference type="OMA" id="TAMMVEM"/>
<dbReference type="OrthoDB" id="1890443at2759"/>
<dbReference type="PhylomeDB" id="Q9LDB4"/>
<dbReference type="PRO" id="PR:Q9LDB4"/>
<dbReference type="Proteomes" id="UP000006548">
    <property type="component" value="Chromosome 3"/>
</dbReference>
<dbReference type="ExpressionAtlas" id="Q9LDB4">
    <property type="expression patterns" value="baseline and differential"/>
</dbReference>
<dbReference type="GO" id="GO:0008289">
    <property type="term" value="F:lipid binding"/>
    <property type="evidence" value="ECO:0007669"/>
    <property type="project" value="UniProtKB-KW"/>
</dbReference>
<dbReference type="GO" id="GO:0006869">
    <property type="term" value="P:lipid transport"/>
    <property type="evidence" value="ECO:0007669"/>
    <property type="project" value="InterPro"/>
</dbReference>
<dbReference type="CDD" id="cd01960">
    <property type="entry name" value="nsLTP1"/>
    <property type="match status" value="1"/>
</dbReference>
<dbReference type="Gene3D" id="1.10.110.10">
    <property type="entry name" value="Plant lipid-transfer and hydrophobic proteins"/>
    <property type="match status" value="1"/>
</dbReference>
<dbReference type="InterPro" id="IPR036312">
    <property type="entry name" value="Bifun_inhib/LTP/seed_sf"/>
</dbReference>
<dbReference type="InterPro" id="IPR016140">
    <property type="entry name" value="Bifunc_inhib/LTP/seed_store"/>
</dbReference>
<dbReference type="InterPro" id="IPR000528">
    <property type="entry name" value="Plant_nsLTP"/>
</dbReference>
<dbReference type="PANTHER" id="PTHR33076">
    <property type="entry name" value="NON-SPECIFIC LIPID-TRANSFER PROTEIN 2-RELATED"/>
    <property type="match status" value="1"/>
</dbReference>
<dbReference type="Pfam" id="PF00234">
    <property type="entry name" value="Tryp_alpha_amyl"/>
    <property type="match status" value="1"/>
</dbReference>
<dbReference type="PRINTS" id="PR00382">
    <property type="entry name" value="LIPIDTRNSFER"/>
</dbReference>
<dbReference type="SMART" id="SM00499">
    <property type="entry name" value="AAI"/>
    <property type="match status" value="1"/>
</dbReference>
<dbReference type="SUPFAM" id="SSF47699">
    <property type="entry name" value="Bifunctional inhibitor/lipid-transfer protein/seed storage 2S albumin"/>
    <property type="match status" value="1"/>
</dbReference>
<dbReference type="PROSITE" id="PS00597">
    <property type="entry name" value="PLANT_LTP"/>
    <property type="match status" value="1"/>
</dbReference>
<feature type="signal peptide" evidence="2">
    <location>
        <begin position="1"/>
        <end position="19"/>
    </location>
</feature>
<feature type="chain" id="PRO_0000018366" description="Non-specific lipid-transfer protein 6">
    <location>
        <begin position="20"/>
        <end position="113"/>
    </location>
</feature>
<feature type="disulfide bond" evidence="2">
    <location>
        <begin position="23"/>
        <end position="70"/>
    </location>
</feature>
<feature type="disulfide bond" evidence="2">
    <location>
        <begin position="33"/>
        <end position="47"/>
    </location>
</feature>
<feature type="disulfide bond" evidence="2">
    <location>
        <begin position="48"/>
        <end position="95"/>
    </location>
</feature>
<feature type="disulfide bond" evidence="2">
    <location>
        <begin position="68"/>
        <end position="109"/>
    </location>
</feature>
<organism>
    <name type="scientific">Arabidopsis thaliana</name>
    <name type="common">Mouse-ear cress</name>
    <dbReference type="NCBI Taxonomy" id="3702"/>
    <lineage>
        <taxon>Eukaryota</taxon>
        <taxon>Viridiplantae</taxon>
        <taxon>Streptophyta</taxon>
        <taxon>Embryophyta</taxon>
        <taxon>Tracheophyta</taxon>
        <taxon>Spermatophyta</taxon>
        <taxon>Magnoliopsida</taxon>
        <taxon>eudicotyledons</taxon>
        <taxon>Gunneridae</taxon>
        <taxon>Pentapetalae</taxon>
        <taxon>rosids</taxon>
        <taxon>malvids</taxon>
        <taxon>Brassicales</taxon>
        <taxon>Brassicaceae</taxon>
        <taxon>Camelineae</taxon>
        <taxon>Arabidopsis</taxon>
    </lineage>
</organism>
<name>NLTP6_ARATH</name>
<accession>Q9LDB4</accession>
<accession>Q2PE58</accession>
<evidence type="ECO:0000250" key="1"/>
<evidence type="ECO:0000255" key="2"/>
<evidence type="ECO:0000305" key="3"/>
<sequence>MRSLLLAVCLVLALHCGEAAVSCNTVIADLYPCLSYVTQGGPVPTLCCNGLTTLKSQAQTSVDRQGVCRCIKSAIGGLTLSPRTIQNALELPSKCGVDLPYKFSPSTDCDSIQ</sequence>
<keyword id="KW-0025">Alternative splicing</keyword>
<keyword id="KW-1015">Disulfide bond</keyword>
<keyword id="KW-0446">Lipid-binding</keyword>
<keyword id="KW-1185">Reference proteome</keyword>
<keyword id="KW-0732">Signal</keyword>
<keyword id="KW-0813">Transport</keyword>
<proteinExistence type="inferred from homology"/>
<reference key="1">
    <citation type="journal article" date="2000" name="Plant Sci.">
        <title>Lipid transfer proteins are encoded by a small multigene family in Arabidopsis thaliana.</title>
        <authorList>
            <person name="Arondel V.A."/>
            <person name="Vergnolle C."/>
            <person name="Cantrel C."/>
            <person name="Kader J.-C."/>
        </authorList>
    </citation>
    <scope>NUCLEOTIDE SEQUENCE [MRNA]</scope>
    <source>
        <strain>cv. Columbia</strain>
    </source>
</reference>
<reference key="2">
    <citation type="submission" date="2006-01" db="EMBL/GenBank/DDBJ databases">
        <title>Xylogen family genes, involved in cell-cell communication in Arabidopsis.</title>
        <authorList>
            <person name="Kobayashi Y."/>
            <person name="Sawa S."/>
            <person name="Iwamoto K."/>
            <person name="Motose H."/>
            <person name="Fukuda H."/>
        </authorList>
    </citation>
    <scope>NUCLEOTIDE SEQUENCE [MRNA]</scope>
</reference>
<reference key="3">
    <citation type="journal article" date="2000" name="Nature">
        <title>Sequence and analysis of chromosome 3 of the plant Arabidopsis thaliana.</title>
        <authorList>
            <person name="Salanoubat M."/>
            <person name="Lemcke K."/>
            <person name="Rieger M."/>
            <person name="Ansorge W."/>
            <person name="Unseld M."/>
            <person name="Fartmann B."/>
            <person name="Valle G."/>
            <person name="Bloecker H."/>
            <person name="Perez-Alonso M."/>
            <person name="Obermaier B."/>
            <person name="Delseny M."/>
            <person name="Boutry M."/>
            <person name="Grivell L.A."/>
            <person name="Mache R."/>
            <person name="Puigdomenech P."/>
            <person name="De Simone V."/>
            <person name="Choisne N."/>
            <person name="Artiguenave F."/>
            <person name="Robert C."/>
            <person name="Brottier P."/>
            <person name="Wincker P."/>
            <person name="Cattolico L."/>
            <person name="Weissenbach J."/>
            <person name="Saurin W."/>
            <person name="Quetier F."/>
            <person name="Schaefer M."/>
            <person name="Mueller-Auer S."/>
            <person name="Gabel C."/>
            <person name="Fuchs M."/>
            <person name="Benes V."/>
            <person name="Wurmbach E."/>
            <person name="Drzonek H."/>
            <person name="Erfle H."/>
            <person name="Jordan N."/>
            <person name="Bangert S."/>
            <person name="Wiedelmann R."/>
            <person name="Kranz H."/>
            <person name="Voss H."/>
            <person name="Holland R."/>
            <person name="Brandt P."/>
            <person name="Nyakatura G."/>
            <person name="Vezzi A."/>
            <person name="D'Angelo M."/>
            <person name="Pallavicini A."/>
            <person name="Toppo S."/>
            <person name="Simionati B."/>
            <person name="Conrad A."/>
            <person name="Hornischer K."/>
            <person name="Kauer G."/>
            <person name="Loehnert T.-H."/>
            <person name="Nordsiek G."/>
            <person name="Reichelt J."/>
            <person name="Scharfe M."/>
            <person name="Schoen O."/>
            <person name="Bargues M."/>
            <person name="Terol J."/>
            <person name="Climent J."/>
            <person name="Navarro P."/>
            <person name="Collado C."/>
            <person name="Perez-Perez A."/>
            <person name="Ottenwaelder B."/>
            <person name="Duchemin D."/>
            <person name="Cooke R."/>
            <person name="Laudie M."/>
            <person name="Berger-Llauro C."/>
            <person name="Purnelle B."/>
            <person name="Masuy D."/>
            <person name="de Haan M."/>
            <person name="Maarse A.C."/>
            <person name="Alcaraz J.-P."/>
            <person name="Cottet A."/>
            <person name="Casacuberta E."/>
            <person name="Monfort A."/>
            <person name="Argiriou A."/>
            <person name="Flores M."/>
            <person name="Liguori R."/>
            <person name="Vitale D."/>
            <person name="Mannhaupt G."/>
            <person name="Haase D."/>
            <person name="Schoof H."/>
            <person name="Rudd S."/>
            <person name="Zaccaria P."/>
            <person name="Mewes H.-W."/>
            <person name="Mayer K.F.X."/>
            <person name="Kaul S."/>
            <person name="Town C.D."/>
            <person name="Koo H.L."/>
            <person name="Tallon L.J."/>
            <person name="Jenkins J."/>
            <person name="Rooney T."/>
            <person name="Rizzo M."/>
            <person name="Walts A."/>
            <person name="Utterback T."/>
            <person name="Fujii C.Y."/>
            <person name="Shea T.P."/>
            <person name="Creasy T.H."/>
            <person name="Haas B."/>
            <person name="Maiti R."/>
            <person name="Wu D."/>
            <person name="Peterson J."/>
            <person name="Van Aken S."/>
            <person name="Pai G."/>
            <person name="Militscher J."/>
            <person name="Sellers P."/>
            <person name="Gill J.E."/>
            <person name="Feldblyum T.V."/>
            <person name="Preuss D."/>
            <person name="Lin X."/>
            <person name="Nierman W.C."/>
            <person name="Salzberg S.L."/>
            <person name="White O."/>
            <person name="Venter J.C."/>
            <person name="Fraser C.M."/>
            <person name="Kaneko T."/>
            <person name="Nakamura Y."/>
            <person name="Sato S."/>
            <person name="Kato T."/>
            <person name="Asamizu E."/>
            <person name="Sasamoto S."/>
            <person name="Kimura T."/>
            <person name="Idesawa K."/>
            <person name="Kawashima K."/>
            <person name="Kishida Y."/>
            <person name="Kiyokawa C."/>
            <person name="Kohara M."/>
            <person name="Matsumoto M."/>
            <person name="Matsuno A."/>
            <person name="Muraki A."/>
            <person name="Nakayama S."/>
            <person name="Nakazaki N."/>
            <person name="Shinpo S."/>
            <person name="Takeuchi C."/>
            <person name="Wada T."/>
            <person name="Watanabe A."/>
            <person name="Yamada M."/>
            <person name="Yasuda M."/>
            <person name="Tabata S."/>
        </authorList>
    </citation>
    <scope>NUCLEOTIDE SEQUENCE [LARGE SCALE GENOMIC DNA]</scope>
    <source>
        <strain>cv. Columbia</strain>
    </source>
</reference>
<reference key="4">
    <citation type="journal article" date="2017" name="Plant J.">
        <title>Araport11: a complete reannotation of the Arabidopsis thaliana reference genome.</title>
        <authorList>
            <person name="Cheng C.Y."/>
            <person name="Krishnakumar V."/>
            <person name="Chan A.P."/>
            <person name="Thibaud-Nissen F."/>
            <person name="Schobel S."/>
            <person name="Town C.D."/>
        </authorList>
    </citation>
    <scope>GENOME REANNOTATION</scope>
    <source>
        <strain>cv. Columbia</strain>
    </source>
</reference>
<reference key="5">
    <citation type="journal article" date="2003" name="Science">
        <title>Empirical analysis of transcriptional activity in the Arabidopsis genome.</title>
        <authorList>
            <person name="Yamada K."/>
            <person name="Lim J."/>
            <person name="Dale J.M."/>
            <person name="Chen H."/>
            <person name="Shinn P."/>
            <person name="Palm C.J."/>
            <person name="Southwick A.M."/>
            <person name="Wu H.C."/>
            <person name="Kim C.J."/>
            <person name="Nguyen M."/>
            <person name="Pham P.K."/>
            <person name="Cheuk R.F."/>
            <person name="Karlin-Newmann G."/>
            <person name="Liu S.X."/>
            <person name="Lam B."/>
            <person name="Sakano H."/>
            <person name="Wu T."/>
            <person name="Yu G."/>
            <person name="Miranda M."/>
            <person name="Quach H.L."/>
            <person name="Tripp M."/>
            <person name="Chang C.H."/>
            <person name="Lee J.M."/>
            <person name="Toriumi M.J."/>
            <person name="Chan M.M."/>
            <person name="Tang C.C."/>
            <person name="Onodera C.S."/>
            <person name="Deng J.M."/>
            <person name="Akiyama K."/>
            <person name="Ansari Y."/>
            <person name="Arakawa T."/>
            <person name="Banh J."/>
            <person name="Banno F."/>
            <person name="Bowser L."/>
            <person name="Brooks S.Y."/>
            <person name="Carninci P."/>
            <person name="Chao Q."/>
            <person name="Choy N."/>
            <person name="Enju A."/>
            <person name="Goldsmith A.D."/>
            <person name="Gurjal M."/>
            <person name="Hansen N.F."/>
            <person name="Hayashizaki Y."/>
            <person name="Johnson-Hopson C."/>
            <person name="Hsuan V.W."/>
            <person name="Iida K."/>
            <person name="Karnes M."/>
            <person name="Khan S."/>
            <person name="Koesema E."/>
            <person name="Ishida J."/>
            <person name="Jiang P.X."/>
            <person name="Jones T."/>
            <person name="Kawai J."/>
            <person name="Kamiya A."/>
            <person name="Meyers C."/>
            <person name="Nakajima M."/>
            <person name="Narusaka M."/>
            <person name="Seki M."/>
            <person name="Sakurai T."/>
            <person name="Satou M."/>
            <person name="Tamse R."/>
            <person name="Vaysberg M."/>
            <person name="Wallender E.K."/>
            <person name="Wong C."/>
            <person name="Yamamura Y."/>
            <person name="Yuan S."/>
            <person name="Shinozaki K."/>
            <person name="Davis R.W."/>
            <person name="Theologis A."/>
            <person name="Ecker J.R."/>
        </authorList>
    </citation>
    <scope>NUCLEOTIDE SEQUENCE [LARGE SCALE MRNA]</scope>
    <source>
        <strain>cv. Columbia</strain>
    </source>
</reference>
<reference key="6">
    <citation type="submission" date="2002-03" db="EMBL/GenBank/DDBJ databases">
        <title>Full-length cDNA from Arabidopsis thaliana.</title>
        <authorList>
            <person name="Brover V.V."/>
            <person name="Troukhan M.E."/>
            <person name="Alexandrov N.A."/>
            <person name="Lu Y.-P."/>
            <person name="Flavell R.B."/>
            <person name="Feldmann K.A."/>
        </authorList>
    </citation>
    <scope>NUCLEOTIDE SEQUENCE [LARGE SCALE MRNA]</scope>
</reference>
<reference key="7">
    <citation type="journal article" date="2008" name="Plant Physiol. Biochem.">
        <title>Plant pathogenesis-related (PR) proteins: a focus on PR peptides.</title>
        <authorList>
            <person name="Sels J."/>
            <person name="Mathys J."/>
            <person name="De Coninck B.M.A."/>
            <person name="Cammue B.P.A."/>
            <person name="De Bolle M.F.C."/>
        </authorList>
    </citation>
    <scope>GENE FAMILY</scope>
    <scope>NOMENCLATURE</scope>
</reference>
<gene>
    <name type="primary">LTP6</name>
    <name type="synonym">XYP15</name>
    <name type="ordered locus">At3g08770</name>
    <name type="ORF">F17O14.24</name>
</gene>